<reference key="1">
    <citation type="journal article" date="2004" name="Proc. Natl. Acad. Sci. U.S.A.">
        <title>The genome sequence of the probiotic intestinal bacterium Lactobacillus johnsonii NCC 533.</title>
        <authorList>
            <person name="Pridmore R.D."/>
            <person name="Berger B."/>
            <person name="Desiere F."/>
            <person name="Vilanova D."/>
            <person name="Barretto C."/>
            <person name="Pittet A.-C."/>
            <person name="Zwahlen M.-C."/>
            <person name="Rouvet M."/>
            <person name="Altermann E."/>
            <person name="Barrangou R."/>
            <person name="Mollet B."/>
            <person name="Mercenier A."/>
            <person name="Klaenhammer T."/>
            <person name="Arigoni F."/>
            <person name="Schell M.A."/>
        </authorList>
    </citation>
    <scope>NUCLEOTIDE SEQUENCE [LARGE SCALE GENOMIC DNA]</scope>
    <source>
        <strain>CNCM I-1225 / La1 / NCC 533</strain>
    </source>
</reference>
<keyword id="KW-0687">Ribonucleoprotein</keyword>
<keyword id="KW-0689">Ribosomal protein</keyword>
<keyword id="KW-0694">RNA-binding</keyword>
<keyword id="KW-0699">rRNA-binding</keyword>
<name>RS4_LACJO</name>
<dbReference type="EMBL" id="AE017198">
    <property type="protein sequence ID" value="AAS08772.1"/>
    <property type="molecule type" value="Genomic_DNA"/>
</dbReference>
<dbReference type="RefSeq" id="WP_003647084.1">
    <property type="nucleotide sequence ID" value="NC_005362.1"/>
</dbReference>
<dbReference type="SMR" id="Q74K05"/>
<dbReference type="GeneID" id="83570614"/>
<dbReference type="KEGG" id="ljo:LJ_0951"/>
<dbReference type="eggNOG" id="COG0522">
    <property type="taxonomic scope" value="Bacteria"/>
</dbReference>
<dbReference type="HOGENOM" id="CLU_092403_0_1_9"/>
<dbReference type="Proteomes" id="UP000000581">
    <property type="component" value="Chromosome"/>
</dbReference>
<dbReference type="GO" id="GO:0015935">
    <property type="term" value="C:small ribosomal subunit"/>
    <property type="evidence" value="ECO:0007669"/>
    <property type="project" value="InterPro"/>
</dbReference>
<dbReference type="GO" id="GO:0019843">
    <property type="term" value="F:rRNA binding"/>
    <property type="evidence" value="ECO:0007669"/>
    <property type="project" value="UniProtKB-UniRule"/>
</dbReference>
<dbReference type="GO" id="GO:0003735">
    <property type="term" value="F:structural constituent of ribosome"/>
    <property type="evidence" value="ECO:0007669"/>
    <property type="project" value="InterPro"/>
</dbReference>
<dbReference type="GO" id="GO:0042274">
    <property type="term" value="P:ribosomal small subunit biogenesis"/>
    <property type="evidence" value="ECO:0007669"/>
    <property type="project" value="TreeGrafter"/>
</dbReference>
<dbReference type="GO" id="GO:0006412">
    <property type="term" value="P:translation"/>
    <property type="evidence" value="ECO:0007669"/>
    <property type="project" value="UniProtKB-UniRule"/>
</dbReference>
<dbReference type="CDD" id="cd00165">
    <property type="entry name" value="S4"/>
    <property type="match status" value="1"/>
</dbReference>
<dbReference type="FunFam" id="3.10.290.10:FF:000001">
    <property type="entry name" value="30S ribosomal protein S4"/>
    <property type="match status" value="1"/>
</dbReference>
<dbReference type="Gene3D" id="1.10.1050.10">
    <property type="entry name" value="Ribosomal Protein S4 Delta 41, Chain A, domain 1"/>
    <property type="match status" value="1"/>
</dbReference>
<dbReference type="Gene3D" id="3.10.290.10">
    <property type="entry name" value="RNA-binding S4 domain"/>
    <property type="match status" value="1"/>
</dbReference>
<dbReference type="HAMAP" id="MF_01306_B">
    <property type="entry name" value="Ribosomal_uS4_B"/>
    <property type="match status" value="1"/>
</dbReference>
<dbReference type="InterPro" id="IPR022801">
    <property type="entry name" value="Ribosomal_uS4"/>
</dbReference>
<dbReference type="InterPro" id="IPR005709">
    <property type="entry name" value="Ribosomal_uS4_bac-type"/>
</dbReference>
<dbReference type="InterPro" id="IPR018079">
    <property type="entry name" value="Ribosomal_uS4_CS"/>
</dbReference>
<dbReference type="InterPro" id="IPR001912">
    <property type="entry name" value="Ribosomal_uS4_N"/>
</dbReference>
<dbReference type="InterPro" id="IPR002942">
    <property type="entry name" value="S4_RNA-bd"/>
</dbReference>
<dbReference type="InterPro" id="IPR036986">
    <property type="entry name" value="S4_RNA-bd_sf"/>
</dbReference>
<dbReference type="NCBIfam" id="NF003717">
    <property type="entry name" value="PRK05327.1"/>
    <property type="match status" value="1"/>
</dbReference>
<dbReference type="NCBIfam" id="TIGR01017">
    <property type="entry name" value="rpsD_bact"/>
    <property type="match status" value="1"/>
</dbReference>
<dbReference type="PANTHER" id="PTHR11831">
    <property type="entry name" value="30S 40S RIBOSOMAL PROTEIN"/>
    <property type="match status" value="1"/>
</dbReference>
<dbReference type="PANTHER" id="PTHR11831:SF4">
    <property type="entry name" value="SMALL RIBOSOMAL SUBUNIT PROTEIN US4M"/>
    <property type="match status" value="1"/>
</dbReference>
<dbReference type="Pfam" id="PF00163">
    <property type="entry name" value="Ribosomal_S4"/>
    <property type="match status" value="1"/>
</dbReference>
<dbReference type="Pfam" id="PF01479">
    <property type="entry name" value="S4"/>
    <property type="match status" value="1"/>
</dbReference>
<dbReference type="SMART" id="SM01390">
    <property type="entry name" value="Ribosomal_S4"/>
    <property type="match status" value="1"/>
</dbReference>
<dbReference type="SMART" id="SM00363">
    <property type="entry name" value="S4"/>
    <property type="match status" value="1"/>
</dbReference>
<dbReference type="SUPFAM" id="SSF55174">
    <property type="entry name" value="Alpha-L RNA-binding motif"/>
    <property type="match status" value="1"/>
</dbReference>
<dbReference type="PROSITE" id="PS00632">
    <property type="entry name" value="RIBOSOMAL_S4"/>
    <property type="match status" value="1"/>
</dbReference>
<dbReference type="PROSITE" id="PS50889">
    <property type="entry name" value="S4"/>
    <property type="match status" value="1"/>
</dbReference>
<feature type="chain" id="PRO_0000132396" description="Small ribosomal subunit protein uS4">
    <location>
        <begin position="1"/>
        <end position="203"/>
    </location>
</feature>
<feature type="domain" description="S4 RNA-binding" evidence="1">
    <location>
        <begin position="93"/>
        <end position="153"/>
    </location>
</feature>
<organism>
    <name type="scientific">Lactobacillus johnsonii (strain CNCM I-12250 / La1 / NCC 533)</name>
    <dbReference type="NCBI Taxonomy" id="257314"/>
    <lineage>
        <taxon>Bacteria</taxon>
        <taxon>Bacillati</taxon>
        <taxon>Bacillota</taxon>
        <taxon>Bacilli</taxon>
        <taxon>Lactobacillales</taxon>
        <taxon>Lactobacillaceae</taxon>
        <taxon>Lactobacillus</taxon>
    </lineage>
</organism>
<protein>
    <recommendedName>
        <fullName evidence="1">Small ribosomal subunit protein uS4</fullName>
    </recommendedName>
    <alternativeName>
        <fullName evidence="2">30S ribosomal protein S4</fullName>
    </alternativeName>
</protein>
<gene>
    <name evidence="1" type="primary">rpsD</name>
    <name type="ordered locus">LJ_0951</name>
</gene>
<sequence length="203" mass="23422">MSRYTGPSWKRSRRLGISLSGTGKEISRRNYAPGDHGPNNRAKVSEYGQQLKEKQKLRWMFGLNERQFQNLFIRAGKIREGKHGVNFMALLERRLDNIVYRLGLASTREQARQLVNHGHILVDGKRVDIPSYEVKVGQEISLRDKSKNLQQVKDALDAVVSRPPFVSFDDSKMTGTLVRLPERDEMEPEVDEALIVEWYNKKL</sequence>
<accession>Q74K05</accession>
<proteinExistence type="inferred from homology"/>
<comment type="function">
    <text evidence="1">One of the primary rRNA binding proteins, it binds directly to 16S rRNA where it nucleates assembly of the body of the 30S subunit.</text>
</comment>
<comment type="function">
    <text evidence="1">With S5 and S12 plays an important role in translational accuracy.</text>
</comment>
<comment type="subunit">
    <text evidence="1">Part of the 30S ribosomal subunit. Contacts protein S5. The interaction surface between S4 and S5 is involved in control of translational fidelity.</text>
</comment>
<comment type="similarity">
    <text evidence="1">Belongs to the universal ribosomal protein uS4 family.</text>
</comment>
<evidence type="ECO:0000255" key="1">
    <source>
        <dbReference type="HAMAP-Rule" id="MF_01306"/>
    </source>
</evidence>
<evidence type="ECO:0000305" key="2"/>